<feature type="chain" id="PRO_0000133356" description="Protein E6">
    <location>
        <begin position="1"/>
        <end position="157"/>
    </location>
</feature>
<feature type="zinc finger region" evidence="1">
    <location>
        <begin position="41"/>
        <end position="77"/>
    </location>
</feature>
<feature type="zinc finger region" evidence="1">
    <location>
        <begin position="114"/>
        <end position="150"/>
    </location>
</feature>
<comment type="function">
    <text evidence="1">Plays a major role in the induction and maintenance of cellular transformation. E6 associates with host UBE3A/E6-AP ubiquitin-protein ligase and modulates its activity. Protects host keratinocytes from apoptosis by mediating the degradation of host BAK1. May also inhibit host immune response.</text>
</comment>
<comment type="subunit">
    <text evidence="1">Forms homodimers. Interacts with ubiquitin-protein ligase UBE3A/E6-AP; this interaction stimulates UBE3A ubiquitin activity. Interacts with host BAK1.</text>
</comment>
<comment type="subcellular location">
    <subcellularLocation>
        <location evidence="1">Host cytoplasm</location>
    </subcellularLocation>
    <subcellularLocation>
        <location evidence="1">Host nucleus</location>
    </subcellularLocation>
</comment>
<comment type="similarity">
    <text evidence="1 2">Belongs to the papillomaviridae E6 protein family.</text>
</comment>
<gene>
    <name evidence="1" type="primary">E6</name>
</gene>
<dbReference type="EMBL" id="U31785">
    <property type="protein sequence ID" value="AAA79436.1"/>
    <property type="molecule type" value="Genomic_DNA"/>
</dbReference>
<dbReference type="SMR" id="P50810"/>
<dbReference type="Proteomes" id="UP000009167">
    <property type="component" value="Genome"/>
</dbReference>
<dbReference type="GO" id="GO:0030430">
    <property type="term" value="C:host cell cytoplasm"/>
    <property type="evidence" value="ECO:0007669"/>
    <property type="project" value="UniProtKB-SubCell"/>
</dbReference>
<dbReference type="GO" id="GO:0042025">
    <property type="term" value="C:host cell nucleus"/>
    <property type="evidence" value="ECO:0007669"/>
    <property type="project" value="UniProtKB-SubCell"/>
</dbReference>
<dbReference type="GO" id="GO:0003677">
    <property type="term" value="F:DNA binding"/>
    <property type="evidence" value="ECO:0007669"/>
    <property type="project" value="UniProtKB-UniRule"/>
</dbReference>
<dbReference type="GO" id="GO:0008270">
    <property type="term" value="F:zinc ion binding"/>
    <property type="evidence" value="ECO:0007669"/>
    <property type="project" value="UniProtKB-KW"/>
</dbReference>
<dbReference type="GO" id="GO:0006351">
    <property type="term" value="P:DNA-templated transcription"/>
    <property type="evidence" value="ECO:0007669"/>
    <property type="project" value="UniProtKB-UniRule"/>
</dbReference>
<dbReference type="GO" id="GO:0006355">
    <property type="term" value="P:regulation of DNA-templated transcription"/>
    <property type="evidence" value="ECO:0007669"/>
    <property type="project" value="UniProtKB-UniRule"/>
</dbReference>
<dbReference type="GO" id="GO:0052150">
    <property type="term" value="P:symbiont-mediated perturbation of host apoptosis"/>
    <property type="evidence" value="ECO:0007669"/>
    <property type="project" value="UniProtKB-KW"/>
</dbReference>
<dbReference type="GO" id="GO:0039648">
    <property type="term" value="P:symbiont-mediated perturbation of host ubiquitin-like protein modification"/>
    <property type="evidence" value="ECO:0007669"/>
    <property type="project" value="UniProtKB-UniRule"/>
</dbReference>
<dbReference type="GO" id="GO:0052170">
    <property type="term" value="P:symbiont-mediated suppression of host innate immune response"/>
    <property type="evidence" value="ECO:0007669"/>
    <property type="project" value="UniProtKB-KW"/>
</dbReference>
<dbReference type="GO" id="GO:0039502">
    <property type="term" value="P:symbiont-mediated suppression of host type I interferon-mediated signaling pathway"/>
    <property type="evidence" value="ECO:0007669"/>
    <property type="project" value="UniProtKB-UniRule"/>
</dbReference>
<dbReference type="Gene3D" id="3.30.240.40">
    <property type="entry name" value="E6 early regulatory protein"/>
    <property type="match status" value="2"/>
</dbReference>
<dbReference type="HAMAP" id="MF_04006">
    <property type="entry name" value="HPV_E6"/>
    <property type="match status" value="1"/>
</dbReference>
<dbReference type="InterPro" id="IPR001334">
    <property type="entry name" value="E6"/>
</dbReference>
<dbReference type="InterPro" id="IPR038575">
    <property type="entry name" value="E6_sf"/>
</dbReference>
<dbReference type="Pfam" id="PF00518">
    <property type="entry name" value="E6"/>
    <property type="match status" value="1"/>
</dbReference>
<dbReference type="SUPFAM" id="SSF161229">
    <property type="entry name" value="E6 C-terminal domain-like"/>
    <property type="match status" value="2"/>
</dbReference>
<sequence length="157" mass="18123">MAEQASEQQNITEKEKEQLPLTIKGLSESLGIPFVDCLIPCNFCGKFLDYLEACEFEVKKLSLIWKDYCVFACCRVCCGATATYEFNQFYQQTVLGRDIELAAGRSIFEIDIRCQTCLAFLDIIEKLDCCGRGLPFHRVRNAWKGICRQCKHFYNDW</sequence>
<reference key="1">
    <citation type="submission" date="1995-10" db="EMBL/GenBank/DDBJ databases">
        <authorList>
            <person name="Delius H."/>
        </authorList>
    </citation>
    <scope>NUCLEOTIDE SEQUENCE [GENOMIC DNA]</scope>
</reference>
<proteinExistence type="inferred from homology"/>
<name>VE6_HPV36</name>
<organism>
    <name type="scientific">Human papillomavirus 36</name>
    <dbReference type="NCBI Taxonomy" id="37957"/>
    <lineage>
        <taxon>Viruses</taxon>
        <taxon>Monodnaviria</taxon>
        <taxon>Shotokuvirae</taxon>
        <taxon>Cossaviricota</taxon>
        <taxon>Papovaviricetes</taxon>
        <taxon>Zurhausenvirales</taxon>
        <taxon>Papillomaviridae</taxon>
        <taxon>Firstpapillomavirinae</taxon>
        <taxon>Betapapillomavirus</taxon>
        <taxon>Betapapillomavirus 1</taxon>
    </lineage>
</organism>
<organismHost>
    <name type="scientific">Homo sapiens</name>
    <name type="common">Human</name>
    <dbReference type="NCBI Taxonomy" id="9606"/>
</organismHost>
<evidence type="ECO:0000255" key="1">
    <source>
        <dbReference type="HAMAP-Rule" id="MF_04006"/>
    </source>
</evidence>
<evidence type="ECO:0000305" key="2"/>
<keyword id="KW-0010">Activator</keyword>
<keyword id="KW-0238">DNA-binding</keyword>
<keyword id="KW-0244">Early protein</keyword>
<keyword id="KW-1035">Host cytoplasm</keyword>
<keyword id="KW-1048">Host nucleus</keyword>
<keyword id="KW-0945">Host-virus interaction</keyword>
<keyword id="KW-1090">Inhibition of host innate immune response by virus</keyword>
<keyword id="KW-0479">Metal-binding</keyword>
<keyword id="KW-1119">Modulation of host cell apoptosis by virus</keyword>
<keyword id="KW-0804">Transcription</keyword>
<keyword id="KW-0805">Transcription regulation</keyword>
<keyword id="KW-0899">Viral immunoevasion</keyword>
<keyword id="KW-0862">Zinc</keyword>
<keyword id="KW-0863">Zinc-finger</keyword>
<protein>
    <recommendedName>
        <fullName evidence="1">Protein E6</fullName>
    </recommendedName>
</protein>
<accession>P50810</accession>